<accession>P29226</accession>
<protein>
    <recommendedName>
        <fullName evidence="1">Protein RecA</fullName>
    </recommendedName>
    <alternativeName>
        <fullName evidence="1">Recombinase A</fullName>
    </alternativeName>
</protein>
<name>RECA_MYCPU</name>
<keyword id="KW-0067">ATP-binding</keyword>
<keyword id="KW-0963">Cytoplasm</keyword>
<keyword id="KW-0227">DNA damage</keyword>
<keyword id="KW-0233">DNA recombination</keyword>
<keyword id="KW-0234">DNA repair</keyword>
<keyword id="KW-0238">DNA-binding</keyword>
<keyword id="KW-0547">Nucleotide-binding</keyword>
<keyword id="KW-1185">Reference proteome</keyword>
<keyword id="KW-0742">SOS response</keyword>
<evidence type="ECO:0000255" key="1">
    <source>
        <dbReference type="HAMAP-Rule" id="MF_00268"/>
    </source>
</evidence>
<organism>
    <name type="scientific">Mycoplasmopsis pulmonis (strain UAB CTIP)</name>
    <name type="common">Mycoplasma pulmonis</name>
    <dbReference type="NCBI Taxonomy" id="272635"/>
    <lineage>
        <taxon>Bacteria</taxon>
        <taxon>Bacillati</taxon>
        <taxon>Mycoplasmatota</taxon>
        <taxon>Mycoplasmoidales</taxon>
        <taxon>Metamycoplasmataceae</taxon>
        <taxon>Mycoplasmopsis</taxon>
    </lineage>
</organism>
<feature type="chain" id="PRO_0000122766" description="Protein RecA">
    <location>
        <begin position="1"/>
        <end position="339"/>
    </location>
</feature>
<feature type="binding site" evidence="1">
    <location>
        <begin position="73"/>
        <end position="80"/>
    </location>
    <ligand>
        <name>ATP</name>
        <dbReference type="ChEBI" id="CHEBI:30616"/>
    </ligand>
</feature>
<gene>
    <name evidence="1" type="primary">recA</name>
    <name type="ordered locus">MYPU_2520</name>
</gene>
<dbReference type="EMBL" id="L22074">
    <property type="protein sequence ID" value="AAA20406.1"/>
    <property type="molecule type" value="Genomic_DNA"/>
</dbReference>
<dbReference type="EMBL" id="AL445563">
    <property type="protein sequence ID" value="CAC13425.1"/>
    <property type="molecule type" value="Genomic_DNA"/>
</dbReference>
<dbReference type="EMBL" id="M81467">
    <property type="protein sequence ID" value="AAA25436.1"/>
    <property type="molecule type" value="Genomic_DNA"/>
</dbReference>
<dbReference type="PIR" id="D41846">
    <property type="entry name" value="D41846"/>
</dbReference>
<dbReference type="PIR" id="D90543">
    <property type="entry name" value="D90543"/>
</dbReference>
<dbReference type="RefSeq" id="WP_010925056.1">
    <property type="nucleotide sequence ID" value="NC_002771.1"/>
</dbReference>
<dbReference type="SMR" id="P29226"/>
<dbReference type="STRING" id="272635.gene:17576842"/>
<dbReference type="KEGG" id="mpu:MYPU_2520"/>
<dbReference type="eggNOG" id="COG0468">
    <property type="taxonomic scope" value="Bacteria"/>
</dbReference>
<dbReference type="HOGENOM" id="CLU_040469_1_2_14"/>
<dbReference type="BioCyc" id="MPUL272635:G1GT6-253-MONOMER"/>
<dbReference type="Proteomes" id="UP000000528">
    <property type="component" value="Chromosome"/>
</dbReference>
<dbReference type="GO" id="GO:0005829">
    <property type="term" value="C:cytosol"/>
    <property type="evidence" value="ECO:0007669"/>
    <property type="project" value="TreeGrafter"/>
</dbReference>
<dbReference type="GO" id="GO:0005524">
    <property type="term" value="F:ATP binding"/>
    <property type="evidence" value="ECO:0007669"/>
    <property type="project" value="UniProtKB-UniRule"/>
</dbReference>
<dbReference type="GO" id="GO:0016887">
    <property type="term" value="F:ATP hydrolysis activity"/>
    <property type="evidence" value="ECO:0007669"/>
    <property type="project" value="InterPro"/>
</dbReference>
<dbReference type="GO" id="GO:0140664">
    <property type="term" value="F:ATP-dependent DNA damage sensor activity"/>
    <property type="evidence" value="ECO:0007669"/>
    <property type="project" value="InterPro"/>
</dbReference>
<dbReference type="GO" id="GO:0003684">
    <property type="term" value="F:damaged DNA binding"/>
    <property type="evidence" value="ECO:0007669"/>
    <property type="project" value="UniProtKB-UniRule"/>
</dbReference>
<dbReference type="GO" id="GO:0003697">
    <property type="term" value="F:single-stranded DNA binding"/>
    <property type="evidence" value="ECO:0007669"/>
    <property type="project" value="UniProtKB-UniRule"/>
</dbReference>
<dbReference type="GO" id="GO:0006310">
    <property type="term" value="P:DNA recombination"/>
    <property type="evidence" value="ECO:0007669"/>
    <property type="project" value="UniProtKB-UniRule"/>
</dbReference>
<dbReference type="GO" id="GO:0006281">
    <property type="term" value="P:DNA repair"/>
    <property type="evidence" value="ECO:0007669"/>
    <property type="project" value="UniProtKB-UniRule"/>
</dbReference>
<dbReference type="GO" id="GO:0009432">
    <property type="term" value="P:SOS response"/>
    <property type="evidence" value="ECO:0007669"/>
    <property type="project" value="UniProtKB-UniRule"/>
</dbReference>
<dbReference type="CDD" id="cd00983">
    <property type="entry name" value="RecA"/>
    <property type="match status" value="1"/>
</dbReference>
<dbReference type="FunFam" id="3.40.50.300:FF:000087">
    <property type="entry name" value="Recombinase RecA"/>
    <property type="match status" value="1"/>
</dbReference>
<dbReference type="Gene3D" id="3.40.50.300">
    <property type="entry name" value="P-loop containing nucleotide triphosphate hydrolases"/>
    <property type="match status" value="1"/>
</dbReference>
<dbReference type="HAMAP" id="MF_00268">
    <property type="entry name" value="RecA"/>
    <property type="match status" value="1"/>
</dbReference>
<dbReference type="InterPro" id="IPR003593">
    <property type="entry name" value="AAA+_ATPase"/>
</dbReference>
<dbReference type="InterPro" id="IPR013765">
    <property type="entry name" value="DNA_recomb/repair_RecA"/>
</dbReference>
<dbReference type="InterPro" id="IPR020584">
    <property type="entry name" value="DNA_recomb/repair_RecA_CS"/>
</dbReference>
<dbReference type="InterPro" id="IPR027417">
    <property type="entry name" value="P-loop_NTPase"/>
</dbReference>
<dbReference type="InterPro" id="IPR049261">
    <property type="entry name" value="RecA-like_C"/>
</dbReference>
<dbReference type="InterPro" id="IPR049428">
    <property type="entry name" value="RecA-like_N"/>
</dbReference>
<dbReference type="InterPro" id="IPR020588">
    <property type="entry name" value="RecA_ATP-bd"/>
</dbReference>
<dbReference type="InterPro" id="IPR023400">
    <property type="entry name" value="RecA_C_sf"/>
</dbReference>
<dbReference type="InterPro" id="IPR020587">
    <property type="entry name" value="RecA_monomer-monomer_interface"/>
</dbReference>
<dbReference type="NCBIfam" id="TIGR02012">
    <property type="entry name" value="tigrfam_recA"/>
    <property type="match status" value="1"/>
</dbReference>
<dbReference type="PANTHER" id="PTHR45900:SF1">
    <property type="entry name" value="MITOCHONDRIAL DNA REPAIR PROTEIN RECA HOMOLOG-RELATED"/>
    <property type="match status" value="1"/>
</dbReference>
<dbReference type="PANTHER" id="PTHR45900">
    <property type="entry name" value="RECA"/>
    <property type="match status" value="1"/>
</dbReference>
<dbReference type="Pfam" id="PF00154">
    <property type="entry name" value="RecA"/>
    <property type="match status" value="1"/>
</dbReference>
<dbReference type="Pfam" id="PF21096">
    <property type="entry name" value="RecA_C"/>
    <property type="match status" value="1"/>
</dbReference>
<dbReference type="PRINTS" id="PR00142">
    <property type="entry name" value="RECA"/>
</dbReference>
<dbReference type="SMART" id="SM00382">
    <property type="entry name" value="AAA"/>
    <property type="match status" value="1"/>
</dbReference>
<dbReference type="SUPFAM" id="SSF52540">
    <property type="entry name" value="P-loop containing nucleoside triphosphate hydrolases"/>
    <property type="match status" value="1"/>
</dbReference>
<dbReference type="SUPFAM" id="SSF54752">
    <property type="entry name" value="RecA protein, C-terminal domain"/>
    <property type="match status" value="1"/>
</dbReference>
<dbReference type="PROSITE" id="PS00321">
    <property type="entry name" value="RECA_1"/>
    <property type="match status" value="1"/>
</dbReference>
<dbReference type="PROSITE" id="PS50162">
    <property type="entry name" value="RECA_2"/>
    <property type="match status" value="1"/>
</dbReference>
<dbReference type="PROSITE" id="PS50163">
    <property type="entry name" value="RECA_3"/>
    <property type="match status" value="1"/>
</dbReference>
<sequence length="339" mass="37190">MSENNQSNQNNQINKIIKSTIEEIEKKFGNESIMLLGQKEKCDVDVFSSGSYAINSALGIGGFPKGRIIEIFGPESSGKTTIALHTIAEIQKKNGFAAFIDVEHSIDPVYAKNLGIDIDNLLISQPDSGEQALEIVDILAKSGSIDLIVVDSVAALVPEAELNGEMKDQSIGLQARLMSKALRKITGSLSKNKTSVIFINQVREKIGVVFGNPETTPGGRALKFYASIRLDVRKSTNIMLNNDISGNQIRVKVVKNKLAPPFKIAETEIIFSKGINKFGEVADLALVHDVLQKKGAWFSYNGNNIAQGRQKLIAQLESNNELFEEIFQKIVEKENQKLS</sequence>
<reference key="1">
    <citation type="journal article" date="1994" name="Gene">
        <title>Cloning and characterization of the recA genes from Mycoplasma pulmonis and M. mycoides subsp. mycoides.</title>
        <authorList>
            <person name="King K.W."/>
            <person name="Woodard A."/>
            <person name="Dybvig K."/>
        </authorList>
    </citation>
    <scope>NUCLEOTIDE SEQUENCE [GENOMIC DNA]</scope>
    <source>
        <strain>KD735</strain>
    </source>
</reference>
<reference key="2">
    <citation type="journal article" date="2001" name="Nucleic Acids Res.">
        <title>The complete genome sequence of the murine respiratory pathogen Mycoplasma pulmonis.</title>
        <authorList>
            <person name="Chambaud I."/>
            <person name="Heilig R."/>
            <person name="Ferris S."/>
            <person name="Barbe V."/>
            <person name="Samson D."/>
            <person name="Galisson F."/>
            <person name="Moszer I."/>
            <person name="Dybvig K."/>
            <person name="Wroblewski H."/>
            <person name="Viari A."/>
            <person name="Rocha E.P.C."/>
            <person name="Blanchard A."/>
        </authorList>
    </citation>
    <scope>NUCLEOTIDE SEQUENCE [LARGE SCALE GENOMIC DNA]</scope>
    <source>
        <strain>UAB CTIP</strain>
    </source>
</reference>
<reference key="3">
    <citation type="journal article" date="1992" name="J. Bacteriol.">
        <title>Degenerate oligonucleotide primers for enzymatic amplification of recA sequences from Gram-positive bacteria and mycoplasmas.</title>
        <authorList>
            <person name="Dybvig K."/>
            <person name="Hollingshead S.K."/>
            <person name="Heath D.G."/>
            <person name="Clewell D.B."/>
            <person name="Sun F."/>
            <person name="Woodard A."/>
        </authorList>
    </citation>
    <scope>NUCLEOTIDE SEQUENCE [GENOMIC DNA] OF 99-200</scope>
</reference>
<proteinExistence type="inferred from homology"/>
<comment type="function">
    <text>Can catalyze the hydrolysis of ATP in the presence of single-stranded DNA, the ATP-dependent uptake of single-stranded DNA by duplex DNA, and the ATP-dependent hybridization of homologous single-stranded DNAs. It interacts with LexA causing its activation and leading to its autocatalytic cleavage.</text>
</comment>
<comment type="subcellular location">
    <subcellularLocation>
        <location evidence="1">Cytoplasm</location>
    </subcellularLocation>
</comment>
<comment type="similarity">
    <text evidence="1">Belongs to the RecA family.</text>
</comment>